<sequence>MKTLYSLRRFYPVETLFNGTLALAGRDQETTGFAWWAGNARLINLSGKLLGAHVAHAGLIVFWAGAMNLFEVAHFVPEKPMYEQGLILLPHLATLGWGVGPGGEVIDTFPYFVSGVLHLISSAVLGFGGIYHALLGPETLEESFPFFGYVWKDRNKMTTILGIHLILLGLGAFLLVFKALYFGGVYDTWAPGGGDVRKITNLTLSPSILFGYLLKSPFGGEGWIVSVDDLEDIIGGHVWLGSICILGGIWHILTKPFAWARRALVWSGEAYLSYSLAALSVFGFIACCFVWFNNTAYPSEFYGPTGPEASQAQAFTFLVRDQRLGANVGSAQGPTGLGKYLMRSPTGEVIFGGETMRFWDLRAPWLEPLRGPNGLDLSRLKKDIQPWQERRSAEYMTHAPLGSLNSVGGVATEINAVNYVSPRSWLATSHFVLGFFLFVGHLWHAGRARAAAAGFEKGIDRDFEPALSMTPLN</sequence>
<geneLocation type="chloroplast"/>
<dbReference type="EMBL" id="EU262887">
    <property type="protein sequence ID" value="ABW98699.1"/>
    <property type="molecule type" value="Genomic_DNA"/>
</dbReference>
<dbReference type="RefSeq" id="YP_001687132.1">
    <property type="nucleotide sequence ID" value="NC_010358.2"/>
</dbReference>
<dbReference type="SMR" id="B0Z4M1"/>
<dbReference type="GeneID" id="5951850"/>
<dbReference type="GO" id="GO:0009535">
    <property type="term" value="C:chloroplast thylakoid membrane"/>
    <property type="evidence" value="ECO:0007669"/>
    <property type="project" value="UniProtKB-SubCell"/>
</dbReference>
<dbReference type="GO" id="GO:0009523">
    <property type="term" value="C:photosystem II"/>
    <property type="evidence" value="ECO:0007669"/>
    <property type="project" value="UniProtKB-KW"/>
</dbReference>
<dbReference type="GO" id="GO:0016168">
    <property type="term" value="F:chlorophyll binding"/>
    <property type="evidence" value="ECO:0007669"/>
    <property type="project" value="UniProtKB-UniRule"/>
</dbReference>
<dbReference type="GO" id="GO:0045156">
    <property type="term" value="F:electron transporter, transferring electrons within the cyclic electron transport pathway of photosynthesis activity"/>
    <property type="evidence" value="ECO:0007669"/>
    <property type="project" value="InterPro"/>
</dbReference>
<dbReference type="GO" id="GO:0046872">
    <property type="term" value="F:metal ion binding"/>
    <property type="evidence" value="ECO:0007669"/>
    <property type="project" value="UniProtKB-KW"/>
</dbReference>
<dbReference type="GO" id="GO:0009772">
    <property type="term" value="P:photosynthetic electron transport in photosystem II"/>
    <property type="evidence" value="ECO:0007669"/>
    <property type="project" value="InterPro"/>
</dbReference>
<dbReference type="FunFam" id="1.10.10.670:FF:000001">
    <property type="entry name" value="Photosystem II CP43 reaction center protein"/>
    <property type="match status" value="1"/>
</dbReference>
<dbReference type="Gene3D" id="1.10.10.670">
    <property type="entry name" value="photosystem ii from thermosynechococcus elongatus"/>
    <property type="match status" value="1"/>
</dbReference>
<dbReference type="HAMAP" id="MF_01496">
    <property type="entry name" value="PSII_PsbC_CP43"/>
    <property type="match status" value="1"/>
</dbReference>
<dbReference type="InterPro" id="IPR000932">
    <property type="entry name" value="PS_antenna-like"/>
</dbReference>
<dbReference type="InterPro" id="IPR036001">
    <property type="entry name" value="PS_II_antenna-like_sf"/>
</dbReference>
<dbReference type="InterPro" id="IPR005869">
    <property type="entry name" value="PSII_PsbC"/>
</dbReference>
<dbReference type="InterPro" id="IPR044900">
    <property type="entry name" value="PSII_PsbC_sf"/>
</dbReference>
<dbReference type="NCBIfam" id="TIGR01153">
    <property type="entry name" value="psbC"/>
    <property type="match status" value="1"/>
</dbReference>
<dbReference type="Pfam" id="PF00421">
    <property type="entry name" value="PSII"/>
    <property type="match status" value="1"/>
</dbReference>
<dbReference type="SUPFAM" id="SSF161077">
    <property type="entry name" value="Photosystem II antenna protein-like"/>
    <property type="match status" value="1"/>
</dbReference>
<name>PSBC_OENAR</name>
<comment type="function">
    <text evidence="1">One of the components of the core complex of photosystem II (PSII). It binds chlorophyll and helps catalyze the primary light-induced photochemical processes of PSII. PSII is a light-driven water:plastoquinone oxidoreductase, using light energy to abstract electrons from H(2)O, generating O(2) and a proton gradient subsequently used for ATP formation.</text>
</comment>
<comment type="cofactor">
    <text evidence="1">Binds multiple chlorophylls and provides some of the ligands for the Ca-4Mn-5O cluster of the oxygen-evolving complex. It may also provide a ligand for a Cl- that is required for oxygen evolution. PSII binds additional chlorophylls, carotenoids and specific lipids.</text>
</comment>
<comment type="subunit">
    <text evidence="1">PSII is composed of 1 copy each of membrane proteins PsbA, PsbB, PsbC, PsbD, PsbE, PsbF, PsbH, PsbI, PsbJ, PsbK, PsbL, PsbM, PsbT, PsbX, PsbY, PsbZ, Psb30/Ycf12, at least 3 peripheral proteins of the oxygen-evolving complex and a large number of cofactors. It forms dimeric complexes.</text>
</comment>
<comment type="subcellular location">
    <subcellularLocation>
        <location evidence="1">Plastid</location>
        <location evidence="1">Chloroplast thylakoid membrane</location>
        <topology evidence="1">Multi-pass membrane protein</topology>
    </subcellularLocation>
</comment>
<comment type="similarity">
    <text evidence="1">Belongs to the PsbB/PsbC family. PsbC subfamily.</text>
</comment>
<accession>B0Z4M1</accession>
<proteinExistence type="inferred from homology"/>
<evidence type="ECO:0000255" key="1">
    <source>
        <dbReference type="HAMAP-Rule" id="MF_01496"/>
    </source>
</evidence>
<gene>
    <name evidence="1" type="primary">psbC</name>
</gene>
<keyword id="KW-0007">Acetylation</keyword>
<keyword id="KW-0148">Chlorophyll</keyword>
<keyword id="KW-0150">Chloroplast</keyword>
<keyword id="KW-0157">Chromophore</keyword>
<keyword id="KW-0464">Manganese</keyword>
<keyword id="KW-0472">Membrane</keyword>
<keyword id="KW-0479">Metal-binding</keyword>
<keyword id="KW-0597">Phosphoprotein</keyword>
<keyword id="KW-0602">Photosynthesis</keyword>
<keyword id="KW-0604">Photosystem II</keyword>
<keyword id="KW-0934">Plastid</keyword>
<keyword id="KW-0793">Thylakoid</keyword>
<keyword id="KW-0812">Transmembrane</keyword>
<keyword id="KW-1133">Transmembrane helix</keyword>
<organism>
    <name type="scientific">Oenothera argillicola</name>
    <name type="common">Appalachian evening primrose</name>
    <dbReference type="NCBI Taxonomy" id="3940"/>
    <lineage>
        <taxon>Eukaryota</taxon>
        <taxon>Viridiplantae</taxon>
        <taxon>Streptophyta</taxon>
        <taxon>Embryophyta</taxon>
        <taxon>Tracheophyta</taxon>
        <taxon>Spermatophyta</taxon>
        <taxon>Magnoliopsida</taxon>
        <taxon>eudicotyledons</taxon>
        <taxon>Gunneridae</taxon>
        <taxon>Pentapetalae</taxon>
        <taxon>rosids</taxon>
        <taxon>malvids</taxon>
        <taxon>Myrtales</taxon>
        <taxon>Onagraceae</taxon>
        <taxon>Onagroideae</taxon>
        <taxon>Onagreae</taxon>
        <taxon>Oenothera</taxon>
    </lineage>
</organism>
<reference key="1">
    <citation type="journal article" date="2008" name="Nucleic Acids Res.">
        <title>The complete nucleotide sequences of the five genetically distinct plastid genomes of Oenothera, subsection Oenothera: I. Sequence evaluation and plastome evolution.</title>
        <authorList>
            <person name="Greiner S."/>
            <person name="Wang X."/>
            <person name="Rauwolf U."/>
            <person name="Silber M.V."/>
            <person name="Mayer K."/>
            <person name="Meurer J."/>
            <person name="Haberer G."/>
            <person name="Herrmann R.G."/>
        </authorList>
    </citation>
    <scope>NUCLEOTIDE SEQUENCE [LARGE SCALE GENOMIC DNA]</scope>
    <source>
        <strain>cv. Douthat 1</strain>
    </source>
</reference>
<protein>
    <recommendedName>
        <fullName evidence="1">Photosystem II CP43 reaction center protein</fullName>
    </recommendedName>
    <alternativeName>
        <fullName evidence="1">PSII 43 kDa protein</fullName>
    </alternativeName>
    <alternativeName>
        <fullName evidence="1">Protein CP-43</fullName>
    </alternativeName>
</protein>
<feature type="propeptide" id="PRO_0000431177" evidence="1">
    <location>
        <begin position="1"/>
        <end position="14"/>
    </location>
</feature>
<feature type="chain" id="PRO_0000361442" description="Photosystem II CP43 reaction center protein" evidence="1">
    <location>
        <begin position="15"/>
        <end position="473"/>
    </location>
</feature>
<feature type="transmembrane region" description="Helical" evidence="1">
    <location>
        <begin position="69"/>
        <end position="93"/>
    </location>
</feature>
<feature type="transmembrane region" description="Helical" evidence="1">
    <location>
        <begin position="134"/>
        <end position="155"/>
    </location>
</feature>
<feature type="transmembrane region" description="Helical" evidence="1">
    <location>
        <begin position="178"/>
        <end position="200"/>
    </location>
</feature>
<feature type="transmembrane region" description="Helical" evidence="1">
    <location>
        <begin position="255"/>
        <end position="275"/>
    </location>
</feature>
<feature type="transmembrane region" description="Helical" evidence="1">
    <location>
        <begin position="291"/>
        <end position="312"/>
    </location>
</feature>
<feature type="transmembrane region" description="Helical" evidence="1">
    <location>
        <begin position="447"/>
        <end position="471"/>
    </location>
</feature>
<feature type="binding site" evidence="1">
    <location>
        <position position="367"/>
    </location>
    <ligand>
        <name>[CaMn4O5] cluster</name>
        <dbReference type="ChEBI" id="CHEBI:189552"/>
    </ligand>
</feature>
<feature type="modified residue" description="N-acetylthreonine" evidence="1">
    <location>
        <position position="15"/>
    </location>
</feature>
<feature type="modified residue" description="Phosphothreonine" evidence="1">
    <location>
        <position position="15"/>
    </location>
</feature>